<organism>
    <name type="scientific">Pseudomonas savastanoi pv. phaseolicola (strain 1448A / Race 6)</name>
    <name type="common">Pseudomonas syringae pv. phaseolicola (strain 1448A / Race 6)</name>
    <dbReference type="NCBI Taxonomy" id="264730"/>
    <lineage>
        <taxon>Bacteria</taxon>
        <taxon>Pseudomonadati</taxon>
        <taxon>Pseudomonadota</taxon>
        <taxon>Gammaproteobacteria</taxon>
        <taxon>Pseudomonadales</taxon>
        <taxon>Pseudomonadaceae</taxon>
        <taxon>Pseudomonas</taxon>
    </lineage>
</organism>
<proteinExistence type="inferred from homology"/>
<dbReference type="EC" id="7.6.2.-" evidence="1"/>
<dbReference type="EMBL" id="CP000058">
    <property type="protein sequence ID" value="AAZ33507.1"/>
    <property type="molecule type" value="Genomic_DNA"/>
</dbReference>
<dbReference type="SMR" id="Q48KI4"/>
<dbReference type="KEGG" id="psp:PSPPH_1860"/>
<dbReference type="eggNOG" id="COG1136">
    <property type="taxonomic scope" value="Bacteria"/>
</dbReference>
<dbReference type="HOGENOM" id="CLU_000604_1_22_6"/>
<dbReference type="Proteomes" id="UP000000551">
    <property type="component" value="Chromosome"/>
</dbReference>
<dbReference type="GO" id="GO:0005886">
    <property type="term" value="C:plasma membrane"/>
    <property type="evidence" value="ECO:0007669"/>
    <property type="project" value="UniProtKB-SubCell"/>
</dbReference>
<dbReference type="GO" id="GO:0005524">
    <property type="term" value="F:ATP binding"/>
    <property type="evidence" value="ECO:0007669"/>
    <property type="project" value="UniProtKB-KW"/>
</dbReference>
<dbReference type="GO" id="GO:0016887">
    <property type="term" value="F:ATP hydrolysis activity"/>
    <property type="evidence" value="ECO:0007669"/>
    <property type="project" value="InterPro"/>
</dbReference>
<dbReference type="GO" id="GO:0022857">
    <property type="term" value="F:transmembrane transporter activity"/>
    <property type="evidence" value="ECO:0007669"/>
    <property type="project" value="TreeGrafter"/>
</dbReference>
<dbReference type="GO" id="GO:0044874">
    <property type="term" value="P:lipoprotein localization to outer membrane"/>
    <property type="evidence" value="ECO:0007669"/>
    <property type="project" value="TreeGrafter"/>
</dbReference>
<dbReference type="GO" id="GO:0089705">
    <property type="term" value="P:protein localization to outer membrane"/>
    <property type="evidence" value="ECO:0007669"/>
    <property type="project" value="TreeGrafter"/>
</dbReference>
<dbReference type="CDD" id="cd03255">
    <property type="entry name" value="ABC_MJ0796_LolCDE_FtsE"/>
    <property type="match status" value="1"/>
</dbReference>
<dbReference type="FunFam" id="3.40.50.300:FF:000230">
    <property type="entry name" value="Lipoprotein-releasing system ATP-binding protein LolD"/>
    <property type="match status" value="1"/>
</dbReference>
<dbReference type="Gene3D" id="3.40.50.300">
    <property type="entry name" value="P-loop containing nucleotide triphosphate hydrolases"/>
    <property type="match status" value="1"/>
</dbReference>
<dbReference type="InterPro" id="IPR003593">
    <property type="entry name" value="AAA+_ATPase"/>
</dbReference>
<dbReference type="InterPro" id="IPR003439">
    <property type="entry name" value="ABC_transporter-like_ATP-bd"/>
</dbReference>
<dbReference type="InterPro" id="IPR017871">
    <property type="entry name" value="ABC_transporter-like_CS"/>
</dbReference>
<dbReference type="InterPro" id="IPR015854">
    <property type="entry name" value="ABC_transpr_LolD-like"/>
</dbReference>
<dbReference type="InterPro" id="IPR011924">
    <property type="entry name" value="LolD_lipo_ATP-bd"/>
</dbReference>
<dbReference type="InterPro" id="IPR017911">
    <property type="entry name" value="MacB-like_ATP-bd"/>
</dbReference>
<dbReference type="InterPro" id="IPR027417">
    <property type="entry name" value="P-loop_NTPase"/>
</dbReference>
<dbReference type="NCBIfam" id="TIGR02211">
    <property type="entry name" value="LolD_lipo_ex"/>
    <property type="match status" value="1"/>
</dbReference>
<dbReference type="PANTHER" id="PTHR24220">
    <property type="entry name" value="IMPORT ATP-BINDING PROTEIN"/>
    <property type="match status" value="1"/>
</dbReference>
<dbReference type="PANTHER" id="PTHR24220:SF689">
    <property type="entry name" value="LIPOPROTEIN-RELEASING SYSTEM ATP-BINDING PROTEIN LOLD"/>
    <property type="match status" value="1"/>
</dbReference>
<dbReference type="Pfam" id="PF00005">
    <property type="entry name" value="ABC_tran"/>
    <property type="match status" value="1"/>
</dbReference>
<dbReference type="SMART" id="SM00382">
    <property type="entry name" value="AAA"/>
    <property type="match status" value="1"/>
</dbReference>
<dbReference type="SUPFAM" id="SSF52540">
    <property type="entry name" value="P-loop containing nucleoside triphosphate hydrolases"/>
    <property type="match status" value="1"/>
</dbReference>
<dbReference type="PROSITE" id="PS00211">
    <property type="entry name" value="ABC_TRANSPORTER_1"/>
    <property type="match status" value="1"/>
</dbReference>
<dbReference type="PROSITE" id="PS50893">
    <property type="entry name" value="ABC_TRANSPORTER_2"/>
    <property type="match status" value="1"/>
</dbReference>
<dbReference type="PROSITE" id="PS51244">
    <property type="entry name" value="LOLD"/>
    <property type="match status" value="1"/>
</dbReference>
<keyword id="KW-0067">ATP-binding</keyword>
<keyword id="KW-0997">Cell inner membrane</keyword>
<keyword id="KW-1003">Cell membrane</keyword>
<keyword id="KW-0472">Membrane</keyword>
<keyword id="KW-0547">Nucleotide-binding</keyword>
<keyword id="KW-1278">Translocase</keyword>
<keyword id="KW-0813">Transport</keyword>
<evidence type="ECO:0000255" key="1">
    <source>
        <dbReference type="HAMAP-Rule" id="MF_01708"/>
    </source>
</evidence>
<protein>
    <recommendedName>
        <fullName evidence="1">Lipoprotein-releasing system ATP-binding protein LolD</fullName>
        <ecNumber evidence="1">7.6.2.-</ecNumber>
    </recommendedName>
</protein>
<accession>Q48KI4</accession>
<sequence>MSDKAVLSCRNLGKSYEEGPESVVVLSGLQLELHPGERVAIVGSSGSGKSTLLNLLGGLDTPSEGSVWLAGEELSALGEKARGLLRNRALGFVYQFHHLLPEFTALENVCMPLLIGRTAIPEARKRSTALLERVGLGHRLAHKPSELSGGERQRVAIARALINQPGLVMLDEPTGNLDHHTAQGIQDLMRELSTSSRTAFLIVTHDMSLARQMDRVLRLEDGRLVEA</sequence>
<reference key="1">
    <citation type="journal article" date="2005" name="J. Bacteriol.">
        <title>Whole-genome sequence analysis of Pseudomonas syringae pv. phaseolicola 1448A reveals divergence among pathovars in genes involved in virulence and transposition.</title>
        <authorList>
            <person name="Joardar V."/>
            <person name="Lindeberg M."/>
            <person name="Jackson R.W."/>
            <person name="Selengut J."/>
            <person name="Dodson R."/>
            <person name="Brinkac L.M."/>
            <person name="Daugherty S.C."/>
            <person name="DeBoy R.T."/>
            <person name="Durkin A.S."/>
            <person name="Gwinn Giglio M."/>
            <person name="Madupu R."/>
            <person name="Nelson W.C."/>
            <person name="Rosovitz M.J."/>
            <person name="Sullivan S.A."/>
            <person name="Crabtree J."/>
            <person name="Creasy T."/>
            <person name="Davidsen T.M."/>
            <person name="Haft D.H."/>
            <person name="Zafar N."/>
            <person name="Zhou L."/>
            <person name="Halpin R."/>
            <person name="Holley T."/>
            <person name="Khouri H.M."/>
            <person name="Feldblyum T.V."/>
            <person name="White O."/>
            <person name="Fraser C.M."/>
            <person name="Chatterjee A.K."/>
            <person name="Cartinhour S."/>
            <person name="Schneider D."/>
            <person name="Mansfield J.W."/>
            <person name="Collmer A."/>
            <person name="Buell R."/>
        </authorList>
    </citation>
    <scope>NUCLEOTIDE SEQUENCE [LARGE SCALE GENOMIC DNA]</scope>
    <source>
        <strain>1448A / Race 6</strain>
    </source>
</reference>
<comment type="function">
    <text evidence="1">Part of the ABC transporter complex LolCDE involved in the translocation of mature outer membrane-directed lipoproteins, from the inner membrane to the periplasmic chaperone, LolA. Responsible for the formation of the LolA-lipoprotein complex in an ATP-dependent manner.</text>
</comment>
<comment type="subunit">
    <text evidence="1">The complex is composed of two ATP-binding proteins (LolD) and two transmembrane proteins (LolC and LolE).</text>
</comment>
<comment type="subcellular location">
    <subcellularLocation>
        <location evidence="1">Cell inner membrane</location>
        <topology evidence="1">Peripheral membrane protein</topology>
    </subcellularLocation>
</comment>
<comment type="similarity">
    <text evidence="1">Belongs to the ABC transporter superfamily. Lipoprotein translocase (TC 3.A.1.125) family.</text>
</comment>
<name>LOLD_PSE14</name>
<feature type="chain" id="PRO_0000272126" description="Lipoprotein-releasing system ATP-binding protein LolD">
    <location>
        <begin position="1"/>
        <end position="227"/>
    </location>
</feature>
<feature type="domain" description="ABC transporter" evidence="1">
    <location>
        <begin position="7"/>
        <end position="227"/>
    </location>
</feature>
<feature type="binding site" evidence="1">
    <location>
        <begin position="43"/>
        <end position="50"/>
    </location>
    <ligand>
        <name>ATP</name>
        <dbReference type="ChEBI" id="CHEBI:30616"/>
    </ligand>
</feature>
<gene>
    <name evidence="1" type="primary">lolD</name>
    <name type="ordered locus">PSPPH_1860</name>
</gene>